<sequence>MALLLLSLGLSLIAAQEFDPHTVMQRNYNVARVSGVWYSIFMASDDLNRIKENGDLRVFVRNIEHLKNGSLIFDFEYMVQGECVAVVVVCEKTEKNGEYSINYEGQNTVAVSETDYRLFITFHLQNFRNGTETHTLALYETCEKYGLGSQNIIDLTNKDPCYSKHYRSPPRPPMRW</sequence>
<evidence type="ECO:0000250" key="1"/>
<evidence type="ECO:0000255" key="2"/>
<evidence type="ECO:0000305" key="3"/>
<evidence type="ECO:0000312" key="4">
    <source>
        <dbReference type="HGNC" id="HGNC:17442"/>
    </source>
</evidence>
<feature type="signal peptide" evidence="2">
    <location>
        <begin position="1"/>
        <end position="15"/>
    </location>
</feature>
<feature type="chain" id="PRO_0000017918" description="Epididymal-specific lipocalin-9">
    <location>
        <begin position="16"/>
        <end position="176"/>
    </location>
</feature>
<feature type="glycosylation site" description="N-linked (GlcNAc...) asparagine" evidence="2">
    <location>
        <position position="68"/>
    </location>
</feature>
<feature type="glycosylation site" description="N-linked (GlcNAc...) asparagine" evidence="2">
    <location>
        <position position="129"/>
    </location>
</feature>
<feature type="disulfide bond" evidence="1">
    <location>
        <begin position="83"/>
        <end position="161"/>
    </location>
</feature>
<feature type="splice variant" id="VSP_062178" description="In isoform 2.">
    <original>ETCEKYGLGSQNIIDLTN</original>
    <variation>DLKKPAKSTDLAHKISST</variation>
    <location>
        <begin position="140"/>
        <end position="157"/>
    </location>
</feature>
<feature type="splice variant" id="VSP_062179" description="In isoform 2.">
    <location>
        <begin position="158"/>
        <end position="176"/>
    </location>
</feature>
<feature type="sequence variant" id="VAR_056167" description="In dbSNP:rs12352552.">
    <original>H</original>
    <variation>Y</variation>
    <location>
        <position position="65"/>
    </location>
</feature>
<feature type="sequence variant" id="VAR_056168" description="In dbSNP:rs7875283.">
    <original>C</original>
    <variation>F</variation>
    <location>
        <position position="90"/>
    </location>
</feature>
<protein>
    <recommendedName>
        <fullName>Epididymal-specific lipocalin-9</fullName>
    </recommendedName>
    <alternativeName>
        <fullName>MUP-like lipocalin</fullName>
    </alternativeName>
</protein>
<gene>
    <name evidence="4" type="primary">LCN9</name>
</gene>
<accession>Q8WX39</accession>
<accession>A0A087WZ21</accession>
<accession>C9J5F0</accession>
<accession>Q6JVE7</accession>
<comment type="interaction">
    <interactant intactId="EBI-19762110">
        <id>Q8WX39</id>
    </interactant>
    <interactant intactId="EBI-19761491">
        <id>Q8IV50-2</id>
        <label>LYSMD2</label>
    </interactant>
    <organismsDiffer>false</organismsDiffer>
    <experiments>3</experiments>
</comment>
<comment type="subcellular location">
    <subcellularLocation>
        <location>Secreted</location>
    </subcellularLocation>
</comment>
<comment type="alternative products">
    <event type="alternative splicing"/>
    <isoform>
        <id>Q8WX39-1</id>
        <name>1</name>
        <sequence type="displayed"/>
    </isoform>
    <isoform>
        <id>Q8WX39-2</id>
        <name>2</name>
        <sequence type="described" ref="VSP_062178 VSP_062179"/>
    </isoform>
</comment>
<comment type="miscellaneous">
    <molecule>Isoform 2</molecule>
    <text evidence="3">Gene prediction based on RNA-Seq exon structure data.</text>
</comment>
<comment type="similarity">
    <text evidence="3">Belongs to the calycin superfamily. Lipocalin family.</text>
</comment>
<dbReference type="EMBL" id="AY301270">
    <property type="protein sequence ID" value="AAQ81975.1"/>
    <property type="molecule type" value="mRNA"/>
</dbReference>
<dbReference type="EMBL" id="AL158822">
    <property type="status" value="NOT_ANNOTATED_CDS"/>
    <property type="molecule type" value="Genomic_DNA"/>
</dbReference>
<dbReference type="CCDS" id="CCDS94528.1">
    <molecule id="Q8WX39-2"/>
</dbReference>
<dbReference type="RefSeq" id="NP_001001676.1">
    <property type="nucleotide sequence ID" value="NM_001001676.1"/>
</dbReference>
<dbReference type="RefSeq" id="NP_001380590.1">
    <molecule id="Q8WX39-2"/>
    <property type="nucleotide sequence ID" value="NM_001393661.1"/>
</dbReference>
<dbReference type="SMR" id="Q8WX39"/>
<dbReference type="BioGRID" id="134206">
    <property type="interactions" value="105"/>
</dbReference>
<dbReference type="FunCoup" id="Q8WX39">
    <property type="interactions" value="153"/>
</dbReference>
<dbReference type="IntAct" id="Q8WX39">
    <property type="interactions" value="26"/>
</dbReference>
<dbReference type="STRING" id="9606.ENSP00000277526"/>
<dbReference type="DrugBank" id="DB02924">
    <property type="generic name" value="(4R)-limonene 1Alpha,2Alpha-epoxide"/>
</dbReference>
<dbReference type="DrugBank" id="DB03087">
    <property type="generic name" value="2-(Sec-Butyl)Thiazole"/>
</dbReference>
<dbReference type="DrugBank" id="DB04512">
    <property type="generic name" value="2-Isobutyl-3-methoxypyrazine"/>
</dbReference>
<dbReference type="DrugBank" id="DB01760">
    <property type="generic name" value="2-Methoxy-3-Isopropylpyrazine"/>
</dbReference>
<dbReference type="DrugBank" id="DB03711">
    <property type="generic name" value="6-Hydroxy-6-Methyl-Heptan-3-One"/>
</dbReference>
<dbReference type="GlyCosmos" id="Q8WX39">
    <property type="glycosylation" value="2 sites, No reported glycans"/>
</dbReference>
<dbReference type="GlyGen" id="Q8WX39">
    <property type="glycosylation" value="2 sites"/>
</dbReference>
<dbReference type="iPTMnet" id="Q8WX39"/>
<dbReference type="PhosphoSitePlus" id="Q8WX39"/>
<dbReference type="BioMuta" id="LCN9"/>
<dbReference type="DMDM" id="338817980"/>
<dbReference type="MassIVE" id="Q8WX39"/>
<dbReference type="PaxDb" id="9606-ENSP00000277526"/>
<dbReference type="Antibodypedia" id="56511">
    <property type="antibodies" value="73 antibodies from 17 providers"/>
</dbReference>
<dbReference type="DNASU" id="392399"/>
<dbReference type="Ensembl" id="ENST00000619315.2">
    <molecule id="Q8WX39-2"/>
    <property type="protein sequence ID" value="ENSP00000482296.2"/>
    <property type="gene ID" value="ENSG00000148386.10"/>
</dbReference>
<dbReference type="MANE-Select" id="ENST00000619315.2">
    <molecule id="Q8WX39-2"/>
    <property type="protein sequence ID" value="ENSP00000482296.2"/>
    <property type="RefSeq nucleotide sequence ID" value="NM_001393661.1"/>
    <property type="RefSeq protein sequence ID" value="NP_001380590.1"/>
</dbReference>
<dbReference type="AGR" id="HGNC:17442"/>
<dbReference type="DisGeNET" id="392399"/>
<dbReference type="GeneCards" id="LCN9"/>
<dbReference type="HGNC" id="HGNC:17442">
    <property type="gene designation" value="LCN9"/>
</dbReference>
<dbReference type="MIM" id="612903">
    <property type="type" value="gene"/>
</dbReference>
<dbReference type="neXtProt" id="NX_Q8WX39"/>
<dbReference type="PharmGKB" id="PA134879860"/>
<dbReference type="VEuPathDB" id="HostDB:ENSG00000148386"/>
<dbReference type="eggNOG" id="ENOG502RTZI">
    <property type="taxonomic scope" value="Eukaryota"/>
</dbReference>
<dbReference type="GeneTree" id="ENSGT01050000244868"/>
<dbReference type="HOGENOM" id="CLU_094061_4_0_1"/>
<dbReference type="InParanoid" id="Q8WX39"/>
<dbReference type="OMA" id="NYDMAKV"/>
<dbReference type="OrthoDB" id="9048943at2759"/>
<dbReference type="PAN-GO" id="Q8WX39">
    <property type="GO annotations" value="1 GO annotation based on evolutionary models"/>
</dbReference>
<dbReference type="PhylomeDB" id="Q8WX39"/>
<dbReference type="TreeFam" id="TF338197"/>
<dbReference type="PathwayCommons" id="Q8WX39"/>
<dbReference type="Reactome" id="R-HSA-804914">
    <property type="pathway name" value="Transport of fatty acids"/>
</dbReference>
<dbReference type="SignaLink" id="Q8WX39"/>
<dbReference type="BioGRID-ORCS" id="392399">
    <property type="hits" value="4 hits in 1130 CRISPR screens"/>
</dbReference>
<dbReference type="GenomeRNAi" id="392399"/>
<dbReference type="Pharos" id="Q8WX39">
    <property type="development level" value="Tdark"/>
</dbReference>
<dbReference type="PRO" id="PR:Q8WX39"/>
<dbReference type="Proteomes" id="UP000005640">
    <property type="component" value="Chromosome 9"/>
</dbReference>
<dbReference type="RNAct" id="Q8WX39">
    <property type="molecule type" value="protein"/>
</dbReference>
<dbReference type="Bgee" id="ENSG00000148386">
    <property type="expression patterns" value="Expressed in substantia nigra and 50 other cell types or tissues"/>
</dbReference>
<dbReference type="ExpressionAtlas" id="Q8WX39">
    <property type="expression patterns" value="baseline and differential"/>
</dbReference>
<dbReference type="GO" id="GO:0005615">
    <property type="term" value="C:extracellular space"/>
    <property type="evidence" value="ECO:0000318"/>
    <property type="project" value="GO_Central"/>
</dbReference>
<dbReference type="GO" id="GO:0036094">
    <property type="term" value="F:small molecule binding"/>
    <property type="evidence" value="ECO:0007669"/>
    <property type="project" value="InterPro"/>
</dbReference>
<dbReference type="Gene3D" id="2.40.128.20">
    <property type="match status" value="1"/>
</dbReference>
<dbReference type="InterPro" id="IPR012674">
    <property type="entry name" value="Calycin"/>
</dbReference>
<dbReference type="InterPro" id="IPR002345">
    <property type="entry name" value="Lipocalin"/>
</dbReference>
<dbReference type="InterPro" id="IPR022272">
    <property type="entry name" value="Lipocalin_CS"/>
</dbReference>
<dbReference type="InterPro" id="IPR000566">
    <property type="entry name" value="Lipocln_cytosolic_FA-bd_dom"/>
</dbReference>
<dbReference type="InterPro" id="IPR002971">
    <property type="entry name" value="Maj_urinary"/>
</dbReference>
<dbReference type="PANTHER" id="PTHR11430:SF28">
    <property type="entry name" value="EPIDIDYMAL-SPECIFIC LIPOCALIN-9"/>
    <property type="match status" value="1"/>
</dbReference>
<dbReference type="PANTHER" id="PTHR11430">
    <property type="entry name" value="LIPOCALIN"/>
    <property type="match status" value="1"/>
</dbReference>
<dbReference type="Pfam" id="PF00061">
    <property type="entry name" value="Lipocalin"/>
    <property type="match status" value="1"/>
</dbReference>
<dbReference type="PRINTS" id="PR01221">
    <property type="entry name" value="MAJORURINARY"/>
</dbReference>
<dbReference type="SUPFAM" id="SSF50814">
    <property type="entry name" value="Lipocalins"/>
    <property type="match status" value="1"/>
</dbReference>
<dbReference type="PROSITE" id="PS00213">
    <property type="entry name" value="LIPOCALIN"/>
    <property type="match status" value="1"/>
</dbReference>
<name>LCN9_HUMAN</name>
<keyword id="KW-0025">Alternative splicing</keyword>
<keyword id="KW-1015">Disulfide bond</keyword>
<keyword id="KW-0325">Glycoprotein</keyword>
<keyword id="KW-1185">Reference proteome</keyword>
<keyword id="KW-0964">Secreted</keyword>
<keyword id="KW-0732">Signal</keyword>
<keyword id="KW-0813">Transport</keyword>
<reference key="1">
    <citation type="journal article" date="2004" name="Gene">
        <title>Molecular evolution of epididymal lipocalin genes localized on mouse chromosome 2.</title>
        <authorList>
            <person name="Suzuki K."/>
            <person name="Lareyre J.-J."/>
            <person name="Sanchez D."/>
            <person name="Gutierrez G."/>
            <person name="Araki Y."/>
            <person name="Matusik R.J."/>
            <person name="Orgebin-Crist M.-C."/>
        </authorList>
    </citation>
    <scope>NUCLEOTIDE SEQUENCE [MRNA]</scope>
</reference>
<reference key="2">
    <citation type="journal article" date="2004" name="Nature">
        <title>DNA sequence and analysis of human chromosome 9.</title>
        <authorList>
            <person name="Humphray S.J."/>
            <person name="Oliver K."/>
            <person name="Hunt A.R."/>
            <person name="Plumb R.W."/>
            <person name="Loveland J.E."/>
            <person name="Howe K.L."/>
            <person name="Andrews T.D."/>
            <person name="Searle S."/>
            <person name="Hunt S.E."/>
            <person name="Scott C.E."/>
            <person name="Jones M.C."/>
            <person name="Ainscough R."/>
            <person name="Almeida J.P."/>
            <person name="Ambrose K.D."/>
            <person name="Ashwell R.I.S."/>
            <person name="Babbage A.K."/>
            <person name="Babbage S."/>
            <person name="Bagguley C.L."/>
            <person name="Bailey J."/>
            <person name="Banerjee R."/>
            <person name="Barker D.J."/>
            <person name="Barlow K.F."/>
            <person name="Bates K."/>
            <person name="Beasley H."/>
            <person name="Beasley O."/>
            <person name="Bird C.P."/>
            <person name="Bray-Allen S."/>
            <person name="Brown A.J."/>
            <person name="Brown J.Y."/>
            <person name="Burford D."/>
            <person name="Burrill W."/>
            <person name="Burton J."/>
            <person name="Carder C."/>
            <person name="Carter N.P."/>
            <person name="Chapman J.C."/>
            <person name="Chen Y."/>
            <person name="Clarke G."/>
            <person name="Clark S.Y."/>
            <person name="Clee C.M."/>
            <person name="Clegg S."/>
            <person name="Collier R.E."/>
            <person name="Corby N."/>
            <person name="Crosier M."/>
            <person name="Cummings A.T."/>
            <person name="Davies J."/>
            <person name="Dhami P."/>
            <person name="Dunn M."/>
            <person name="Dutta I."/>
            <person name="Dyer L.W."/>
            <person name="Earthrowl M.E."/>
            <person name="Faulkner L."/>
            <person name="Fleming C.J."/>
            <person name="Frankish A."/>
            <person name="Frankland J.A."/>
            <person name="French L."/>
            <person name="Fricker D.G."/>
            <person name="Garner P."/>
            <person name="Garnett J."/>
            <person name="Ghori J."/>
            <person name="Gilbert J.G.R."/>
            <person name="Glison C."/>
            <person name="Grafham D.V."/>
            <person name="Gribble S."/>
            <person name="Griffiths C."/>
            <person name="Griffiths-Jones S."/>
            <person name="Grocock R."/>
            <person name="Guy J."/>
            <person name="Hall R.E."/>
            <person name="Hammond S."/>
            <person name="Harley J.L."/>
            <person name="Harrison E.S.I."/>
            <person name="Hart E.A."/>
            <person name="Heath P.D."/>
            <person name="Henderson C.D."/>
            <person name="Hopkins B.L."/>
            <person name="Howard P.J."/>
            <person name="Howden P.J."/>
            <person name="Huckle E."/>
            <person name="Johnson C."/>
            <person name="Johnson D."/>
            <person name="Joy A.A."/>
            <person name="Kay M."/>
            <person name="Keenan S."/>
            <person name="Kershaw J.K."/>
            <person name="Kimberley A.M."/>
            <person name="King A."/>
            <person name="Knights A."/>
            <person name="Laird G.K."/>
            <person name="Langford C."/>
            <person name="Lawlor S."/>
            <person name="Leongamornlert D.A."/>
            <person name="Leversha M."/>
            <person name="Lloyd C."/>
            <person name="Lloyd D.M."/>
            <person name="Lovell J."/>
            <person name="Martin S."/>
            <person name="Mashreghi-Mohammadi M."/>
            <person name="Matthews L."/>
            <person name="McLaren S."/>
            <person name="McLay K.E."/>
            <person name="McMurray A."/>
            <person name="Milne S."/>
            <person name="Nickerson T."/>
            <person name="Nisbett J."/>
            <person name="Nordsiek G."/>
            <person name="Pearce A.V."/>
            <person name="Peck A.I."/>
            <person name="Porter K.M."/>
            <person name="Pandian R."/>
            <person name="Pelan S."/>
            <person name="Phillimore B."/>
            <person name="Povey S."/>
            <person name="Ramsey Y."/>
            <person name="Rand V."/>
            <person name="Scharfe M."/>
            <person name="Sehra H.K."/>
            <person name="Shownkeen R."/>
            <person name="Sims S.K."/>
            <person name="Skuce C.D."/>
            <person name="Smith M."/>
            <person name="Steward C.A."/>
            <person name="Swarbreck D."/>
            <person name="Sycamore N."/>
            <person name="Tester J."/>
            <person name="Thorpe A."/>
            <person name="Tracey A."/>
            <person name="Tromans A."/>
            <person name="Thomas D.W."/>
            <person name="Wall M."/>
            <person name="Wallis J.M."/>
            <person name="West A.P."/>
            <person name="Whitehead S.L."/>
            <person name="Willey D.L."/>
            <person name="Williams S.A."/>
            <person name="Wilming L."/>
            <person name="Wray P.W."/>
            <person name="Young L."/>
            <person name="Ashurst J.L."/>
            <person name="Coulson A."/>
            <person name="Blocker H."/>
            <person name="Durbin R.M."/>
            <person name="Sulston J.E."/>
            <person name="Hubbard T."/>
            <person name="Jackson M.J."/>
            <person name="Bentley D.R."/>
            <person name="Beck S."/>
            <person name="Rogers J."/>
            <person name="Dunham I."/>
        </authorList>
    </citation>
    <scope>NUCLEOTIDE SEQUENCE [LARGE SCALE GENOMIC DNA]</scope>
</reference>
<proteinExistence type="evidence at protein level"/>
<organism>
    <name type="scientific">Homo sapiens</name>
    <name type="common">Human</name>
    <dbReference type="NCBI Taxonomy" id="9606"/>
    <lineage>
        <taxon>Eukaryota</taxon>
        <taxon>Metazoa</taxon>
        <taxon>Chordata</taxon>
        <taxon>Craniata</taxon>
        <taxon>Vertebrata</taxon>
        <taxon>Euteleostomi</taxon>
        <taxon>Mammalia</taxon>
        <taxon>Eutheria</taxon>
        <taxon>Euarchontoglires</taxon>
        <taxon>Primates</taxon>
        <taxon>Haplorrhini</taxon>
        <taxon>Catarrhini</taxon>
        <taxon>Hominidae</taxon>
        <taxon>Homo</taxon>
    </lineage>
</organism>